<gene>
    <name evidence="1" type="primary">rpl37e</name>
    <name type="ordered locus">Cmaq_0164</name>
</gene>
<evidence type="ECO:0000255" key="1">
    <source>
        <dbReference type="HAMAP-Rule" id="MF_00547"/>
    </source>
</evidence>
<evidence type="ECO:0000305" key="2"/>
<protein>
    <recommendedName>
        <fullName evidence="1">Large ribosomal subunit protein eL37</fullName>
    </recommendedName>
    <alternativeName>
        <fullName evidence="2">50S ribosomal protein L37e</fullName>
    </alternativeName>
</protein>
<keyword id="KW-0479">Metal-binding</keyword>
<keyword id="KW-1185">Reference proteome</keyword>
<keyword id="KW-0687">Ribonucleoprotein</keyword>
<keyword id="KW-0689">Ribosomal protein</keyword>
<keyword id="KW-0694">RNA-binding</keyword>
<keyword id="KW-0699">rRNA-binding</keyword>
<keyword id="KW-0862">Zinc</keyword>
<keyword id="KW-0863">Zinc-finger</keyword>
<proteinExistence type="inferred from homology"/>
<comment type="function">
    <text evidence="1">Binds to the 23S rRNA.</text>
</comment>
<comment type="cofactor">
    <cofactor evidence="1">
        <name>Zn(2+)</name>
        <dbReference type="ChEBI" id="CHEBI:29105"/>
    </cofactor>
    <text evidence="1">Binds 1 zinc ion per subunit.</text>
</comment>
<comment type="similarity">
    <text evidence="1">Belongs to the eukaryotic ribosomal protein eL37 family.</text>
</comment>
<accession>A8MA81</accession>
<dbReference type="EMBL" id="CP000852">
    <property type="protein sequence ID" value="ABW01013.1"/>
    <property type="molecule type" value="Genomic_DNA"/>
</dbReference>
<dbReference type="RefSeq" id="WP_012185233.1">
    <property type="nucleotide sequence ID" value="NC_009954.1"/>
</dbReference>
<dbReference type="SMR" id="A8MA81"/>
<dbReference type="STRING" id="397948.Cmaq_0164"/>
<dbReference type="GeneID" id="5709402"/>
<dbReference type="KEGG" id="cma:Cmaq_0164"/>
<dbReference type="eggNOG" id="arCOG04126">
    <property type="taxonomic scope" value="Archaea"/>
</dbReference>
<dbReference type="HOGENOM" id="CLU_208825_0_0_2"/>
<dbReference type="OrthoDB" id="5619at2157"/>
<dbReference type="Proteomes" id="UP000001137">
    <property type="component" value="Chromosome"/>
</dbReference>
<dbReference type="GO" id="GO:1990904">
    <property type="term" value="C:ribonucleoprotein complex"/>
    <property type="evidence" value="ECO:0007669"/>
    <property type="project" value="UniProtKB-KW"/>
</dbReference>
<dbReference type="GO" id="GO:0005840">
    <property type="term" value="C:ribosome"/>
    <property type="evidence" value="ECO:0007669"/>
    <property type="project" value="UniProtKB-KW"/>
</dbReference>
<dbReference type="GO" id="GO:0019843">
    <property type="term" value="F:rRNA binding"/>
    <property type="evidence" value="ECO:0007669"/>
    <property type="project" value="UniProtKB-KW"/>
</dbReference>
<dbReference type="GO" id="GO:0003735">
    <property type="term" value="F:structural constituent of ribosome"/>
    <property type="evidence" value="ECO:0007669"/>
    <property type="project" value="InterPro"/>
</dbReference>
<dbReference type="GO" id="GO:0008270">
    <property type="term" value="F:zinc ion binding"/>
    <property type="evidence" value="ECO:0007669"/>
    <property type="project" value="UniProtKB-UniRule"/>
</dbReference>
<dbReference type="GO" id="GO:0006412">
    <property type="term" value="P:translation"/>
    <property type="evidence" value="ECO:0007669"/>
    <property type="project" value="UniProtKB-UniRule"/>
</dbReference>
<dbReference type="Gene3D" id="2.20.25.30">
    <property type="match status" value="1"/>
</dbReference>
<dbReference type="HAMAP" id="MF_00547">
    <property type="entry name" value="Ribosomal_eL37"/>
    <property type="match status" value="1"/>
</dbReference>
<dbReference type="InterPro" id="IPR001569">
    <property type="entry name" value="Ribosomal_eL37"/>
</dbReference>
<dbReference type="InterPro" id="IPR011331">
    <property type="entry name" value="Ribosomal_eL37/eL43"/>
</dbReference>
<dbReference type="InterPro" id="IPR018267">
    <property type="entry name" value="Ribosomal_eL37_CS"/>
</dbReference>
<dbReference type="InterPro" id="IPR011332">
    <property type="entry name" value="Ribosomal_zn-bd"/>
</dbReference>
<dbReference type="NCBIfam" id="NF003214">
    <property type="entry name" value="PRK04179.1"/>
    <property type="match status" value="1"/>
</dbReference>
<dbReference type="Pfam" id="PF01907">
    <property type="entry name" value="Ribosomal_L37e"/>
    <property type="match status" value="1"/>
</dbReference>
<dbReference type="SUPFAM" id="SSF57829">
    <property type="entry name" value="Zn-binding ribosomal proteins"/>
    <property type="match status" value="1"/>
</dbReference>
<dbReference type="PROSITE" id="PS01077">
    <property type="entry name" value="RIBOSOMAL_L37E"/>
    <property type="match status" value="1"/>
</dbReference>
<sequence>MTKGTPSFGRMSRGKTHIRCPRCGRHSYNIVKGYCAACGYGRSRRIKRGLAKVLGRPVGNR</sequence>
<name>RL37_CALMQ</name>
<feature type="chain" id="PRO_1000146603" description="Large ribosomal subunit protein eL37">
    <location>
        <begin position="1"/>
        <end position="61"/>
    </location>
</feature>
<feature type="zinc finger region" description="C4-type" evidence="1">
    <location>
        <begin position="20"/>
        <end position="38"/>
    </location>
</feature>
<feature type="binding site" evidence="1">
    <location>
        <position position="20"/>
    </location>
    <ligand>
        <name>Zn(2+)</name>
        <dbReference type="ChEBI" id="CHEBI:29105"/>
    </ligand>
</feature>
<feature type="binding site" evidence="1">
    <location>
        <position position="23"/>
    </location>
    <ligand>
        <name>Zn(2+)</name>
        <dbReference type="ChEBI" id="CHEBI:29105"/>
    </ligand>
</feature>
<feature type="binding site" evidence="1">
    <location>
        <position position="35"/>
    </location>
    <ligand>
        <name>Zn(2+)</name>
        <dbReference type="ChEBI" id="CHEBI:29105"/>
    </ligand>
</feature>
<feature type="binding site" evidence="1">
    <location>
        <position position="38"/>
    </location>
    <ligand>
        <name>Zn(2+)</name>
        <dbReference type="ChEBI" id="CHEBI:29105"/>
    </ligand>
</feature>
<organism>
    <name type="scientific">Caldivirga maquilingensis (strain ATCC 700844 / DSM 13496 / JCM 10307 / IC-167)</name>
    <dbReference type="NCBI Taxonomy" id="397948"/>
    <lineage>
        <taxon>Archaea</taxon>
        <taxon>Thermoproteota</taxon>
        <taxon>Thermoprotei</taxon>
        <taxon>Thermoproteales</taxon>
        <taxon>Thermoproteaceae</taxon>
        <taxon>Caldivirga</taxon>
    </lineage>
</organism>
<reference key="1">
    <citation type="submission" date="2007-10" db="EMBL/GenBank/DDBJ databases">
        <title>Complete sequence of Caldivirga maquilingensis IC-167.</title>
        <authorList>
            <consortium name="US DOE Joint Genome Institute"/>
            <person name="Copeland A."/>
            <person name="Lucas S."/>
            <person name="Lapidus A."/>
            <person name="Barry K."/>
            <person name="Glavina del Rio T."/>
            <person name="Dalin E."/>
            <person name="Tice H."/>
            <person name="Pitluck S."/>
            <person name="Saunders E."/>
            <person name="Brettin T."/>
            <person name="Bruce D."/>
            <person name="Detter J.C."/>
            <person name="Han C."/>
            <person name="Schmutz J."/>
            <person name="Larimer F."/>
            <person name="Land M."/>
            <person name="Hauser L."/>
            <person name="Kyrpides N."/>
            <person name="Ivanova N."/>
            <person name="Biddle J.F."/>
            <person name="Zhang Z."/>
            <person name="Fitz-Gibbon S.T."/>
            <person name="Lowe T.M."/>
            <person name="Saltikov C."/>
            <person name="House C.H."/>
            <person name="Richardson P."/>
        </authorList>
    </citation>
    <scope>NUCLEOTIDE SEQUENCE [LARGE SCALE GENOMIC DNA]</scope>
    <source>
        <strain>ATCC 700844 / DSM 13496 / JCM 10307 / IC-167</strain>
    </source>
</reference>